<proteinExistence type="evidence at transcript level"/>
<accession>B6DMK2</accession>
<accession>Q0DZI2</accession>
<organism>
    <name type="scientific">Oryza sativa subsp. japonica</name>
    <name type="common">Rice</name>
    <dbReference type="NCBI Taxonomy" id="39947"/>
    <lineage>
        <taxon>Eukaryota</taxon>
        <taxon>Viridiplantae</taxon>
        <taxon>Streptophyta</taxon>
        <taxon>Embryophyta</taxon>
        <taxon>Tracheophyta</taxon>
        <taxon>Spermatophyta</taxon>
        <taxon>Magnoliopsida</taxon>
        <taxon>Liliopsida</taxon>
        <taxon>Poales</taxon>
        <taxon>Poaceae</taxon>
        <taxon>BOP clade</taxon>
        <taxon>Oryzoideae</taxon>
        <taxon>Oryzeae</taxon>
        <taxon>Oryzinae</taxon>
        <taxon>Oryza</taxon>
        <taxon>Oryza sativa</taxon>
    </lineage>
</organism>
<feature type="chain" id="PRO_0000432117" description="ATP-dependent DNA helicase MER3 homolog">
    <location>
        <begin position="1"/>
        <end position="1205"/>
    </location>
</feature>
<feature type="domain" description="Helicase ATP-binding" evidence="3">
    <location>
        <begin position="41"/>
        <end position="236"/>
    </location>
</feature>
<feature type="domain" description="Helicase C-terminal" evidence="4">
    <location>
        <begin position="266"/>
        <end position="467"/>
    </location>
</feature>
<feature type="domain" description="SEC63" evidence="2">
    <location>
        <begin position="541"/>
        <end position="852"/>
    </location>
</feature>
<feature type="region of interest" description="Disordered" evidence="5">
    <location>
        <begin position="1075"/>
        <end position="1131"/>
    </location>
</feature>
<feature type="short sequence motif" description="DEAH box" evidence="3">
    <location>
        <begin position="172"/>
        <end position="175"/>
    </location>
</feature>
<feature type="compositionally biased region" description="Polar residues" evidence="5">
    <location>
        <begin position="1075"/>
        <end position="1091"/>
    </location>
</feature>
<feature type="compositionally biased region" description="Basic and acidic residues" evidence="5">
    <location>
        <begin position="1095"/>
        <end position="1122"/>
    </location>
</feature>
<feature type="binding site" evidence="3">
    <location>
        <begin position="54"/>
        <end position="61"/>
    </location>
    <ligand>
        <name>ATP</name>
        <dbReference type="ChEBI" id="CHEBI:30616"/>
    </ligand>
</feature>
<name>MER3_ORYSJ</name>
<sequence>MAAMGHLGDPYALRSVADLPPPFRSVFGFRYFNSLQSECFPACFLSDVNMVISAPTGSGKTVLFELCILRLLSRFLSSEWRFNLIKGTLKTIYIAPMKALVQEKLRDWNMKLGSLGISCLEMTGDNEFYNTKSIHDADLILTTPEKFDSVSRHGIRDGGLGFFSDIALVLIDEVHLLNDPRGAALEAIVSRIKMLSRLGTMKIAPLANVRFIAVSATIPNIEDIAEWLAVPSEGIKRFGEEMRPVKLTTKVFGYAPARNDFLFERRLQSFIFDILMQHSRGKSALVFCSTRKGAQEAAQCLSQTASSLGYSNPFMKSMQQYEHLKEAALTCSDKQLQACLVHGVGYHNGGLCLKDRSVVEGLFLKGDIQILCTTNTLAHGINLPAHTVVIKSTQFFNKEKGLYVEYERSMVLQMCGRAGRPPFDDTGTIIIMTRRETVHLYENLLNGCEMVESQLLPCAVEHLNAEIVQLTVSDITLAIEWLKCSYLYIRIKKNPQHYGIKKEIPRELLEKQMKDICVEKIHELGEYGLIWTDEDGFLLKPLEPGRLMTKFYLKFDTMKLIVKASACCTLEDLLHIICHSAEITWIQLRRNEKKLLNEINADKEGRLWFHVVGANGKRKKRIQTREEKIFILANDCLTGDPLVHDLSLNQEMNSICSNGCRVAKCMREYFIYKKNYKSAISSMLLAKCLHQKLWESSPFLLKQLPGIGIVTAKALKTAGIDSFESLATADARKIESVTGRNYPFGDSIKSYLPSLGPKIDINIEDAGNRQGKSTIIVTLTRLSQAVGSSKQNYADMVVGSEEDNAILFHEKIKTQEFSSPYSVKLYVPCPPNARATLKVDVIFEEYVGLDIHKKHVVSREDFHVTKVFGIKKAEPLYNLPAESCLVSSKTTRTNQSKYHNGQNPLSKEVCVIEDDFRAKAPDKDDNDLEILGTREYNNLASLEAPSFTLLHEEDYEDVPDVLASEPVEAECKSATNNTIFDHIRKKSRDFPNLMLSKSMDSSYEPLILKKMKTSGDQFGLDQSSLHAYEVTPMVFDRTEARVSPNNTDERCRNILTRTAETRSFQFTGKMDSISQKSEILNRTQGKNSTQLAGKKAFEKSKTPDENSLHFVGKRDSSSEKSKALSKTPDENSLQFLGKMDSSSEKSKFCFSSPLADFQPMQCTKQVAASVQPLTIQDYCKDILASAKSSGTGASFLDVKSVFSFL</sequence>
<keyword id="KW-0067">ATP-binding</keyword>
<keyword id="KW-0158">Chromosome</keyword>
<keyword id="KW-0238">DNA-binding</keyword>
<keyword id="KW-0347">Helicase</keyword>
<keyword id="KW-0378">Hydrolase</keyword>
<keyword id="KW-0413">Isomerase</keyword>
<keyword id="KW-0469">Meiosis</keyword>
<keyword id="KW-0547">Nucleotide-binding</keyword>
<keyword id="KW-0539">Nucleus</keyword>
<keyword id="KW-1185">Reference proteome</keyword>
<gene>
    <name evidence="10" type="primary">MER3</name>
    <name evidence="9" type="synonym">RCK</name>
    <name evidence="12" type="synonym">RMC1</name>
    <name evidence="13" type="ordered locus">Os02g0617500</name>
    <name evidence="11" type="ordered locus">LOC_Os02g40450</name>
</gene>
<protein>
    <recommendedName>
        <fullName evidence="11">ATP-dependent DNA helicase MER3 homolog</fullName>
        <ecNumber evidence="1">5.6.2.4</ecNumber>
    </recommendedName>
    <alternativeName>
        <fullName evidence="11">DNA 3'-5' helicase MER3</fullName>
    </alternativeName>
    <alternativeName>
        <fullName evidence="10">Protein RICE MEIOTIC CROSSOVER 1</fullName>
    </alternativeName>
    <alternativeName>
        <fullName evidence="9">Protein ROCK-N-ROLLERS</fullName>
    </alternativeName>
</protein>
<reference key="1">
    <citation type="journal article" date="2009" name="J. Cell Sci.">
        <title>MER3 is required for normal meiotic crossover formation, but not for presynaptic alignment in rice.</title>
        <authorList>
            <person name="Wang K."/>
            <person name="Tang D."/>
            <person name="Wang M."/>
            <person name="Lu J."/>
            <person name="Yu H."/>
            <person name="Liu J."/>
            <person name="Qian B."/>
            <person name="Gong Z."/>
            <person name="Wang X."/>
            <person name="Chen J."/>
            <person name="Gu M."/>
            <person name="Cheng Z."/>
        </authorList>
    </citation>
    <scope>NUCLEOTIDE SEQUENCE [MRNA]</scope>
    <scope>FUNCTION</scope>
    <scope>DISRUPTION PHENOTYPE</scope>
    <source>
        <strain>cv. Nipponbare</strain>
    </source>
</reference>
<reference key="2">
    <citation type="journal article" date="2005" name="Nature">
        <title>The map-based sequence of the rice genome.</title>
        <authorList>
            <consortium name="International rice genome sequencing project (IRGSP)"/>
        </authorList>
    </citation>
    <scope>NUCLEOTIDE SEQUENCE [LARGE SCALE GENOMIC DNA]</scope>
    <source>
        <strain>cv. Nipponbare</strain>
    </source>
</reference>
<reference key="3">
    <citation type="journal article" date="2008" name="Nucleic Acids Res.">
        <title>The rice annotation project database (RAP-DB): 2008 update.</title>
        <authorList>
            <consortium name="The rice annotation project (RAP)"/>
        </authorList>
    </citation>
    <scope>GENOME REANNOTATION</scope>
    <source>
        <strain>cv. Nipponbare</strain>
    </source>
</reference>
<reference key="4">
    <citation type="journal article" date="2013" name="Rice">
        <title>Improvement of the Oryza sativa Nipponbare reference genome using next generation sequence and optical map data.</title>
        <authorList>
            <person name="Kawahara Y."/>
            <person name="de la Bastide M."/>
            <person name="Hamilton J.P."/>
            <person name="Kanamori H."/>
            <person name="McCombie W.R."/>
            <person name="Ouyang S."/>
            <person name="Schwartz D.C."/>
            <person name="Tanaka T."/>
            <person name="Wu J."/>
            <person name="Zhou S."/>
            <person name="Childs K.L."/>
            <person name="Davidson R.M."/>
            <person name="Lin H."/>
            <person name="Quesada-Ocampo L."/>
            <person name="Vaillancourt B."/>
            <person name="Sakai H."/>
            <person name="Lee S.S."/>
            <person name="Kim J."/>
            <person name="Numa H."/>
            <person name="Itoh T."/>
            <person name="Buell C.R."/>
            <person name="Matsumoto T."/>
        </authorList>
    </citation>
    <scope>GENOME REANNOTATION</scope>
    <source>
        <strain>cv. Nipponbare</strain>
    </source>
</reference>
<reference key="5">
    <citation type="journal article" date="2009" name="Cell Res.">
        <title>Functional conservation of the meiotic genes SDS and RCK in male meiosis in the monocot rice.</title>
        <authorList>
            <person name="Chang L."/>
            <person name="Ma H."/>
            <person name="Xue H.W."/>
        </authorList>
    </citation>
    <scope>FUNCTION</scope>
    <scope>TISSUE SPECIFICITY</scope>
    <scope>DISRUPTION PHENOTYPE</scope>
</reference>
<reference key="6">
    <citation type="journal article" date="2012" name="J. Cell Sci.">
        <title>ZIP4 in homologous chromosome synapsis and crossover formation in rice meiosis.</title>
        <authorList>
            <person name="Shen Y."/>
            <person name="Tang D."/>
            <person name="Wang K."/>
            <person name="Wang M."/>
            <person name="Huang J."/>
            <person name="Luo W."/>
            <person name="Luo Q."/>
            <person name="Hong L."/>
            <person name="Li M."/>
            <person name="Cheng Z."/>
        </authorList>
    </citation>
    <scope>FUNCTION</scope>
    <scope>SUBCELLULAR LOCATION</scope>
</reference>
<dbReference type="EC" id="5.6.2.4" evidence="1"/>
<dbReference type="EMBL" id="FJ008126">
    <property type="protein sequence ID" value="ACI28521.1"/>
    <property type="molecule type" value="mRNA"/>
</dbReference>
<dbReference type="EMBL" id="AP003980">
    <property type="status" value="NOT_ANNOTATED_CDS"/>
    <property type="molecule type" value="Genomic_DNA"/>
</dbReference>
<dbReference type="EMBL" id="AP008208">
    <property type="protein sequence ID" value="BAF09356.1"/>
    <property type="status" value="ALT_SEQ"/>
    <property type="molecule type" value="Genomic_DNA"/>
</dbReference>
<dbReference type="EMBL" id="AP014958">
    <property type="status" value="NOT_ANNOTATED_CDS"/>
    <property type="molecule type" value="Genomic_DNA"/>
</dbReference>
<dbReference type="SMR" id="B6DMK2"/>
<dbReference type="FunCoup" id="B6DMK2">
    <property type="interactions" value="68"/>
</dbReference>
<dbReference type="STRING" id="39947.B6DMK2"/>
<dbReference type="PaxDb" id="39947-B6DMK2"/>
<dbReference type="EnsemblPlants" id="Os02t0617500-01">
    <property type="protein sequence ID" value="Os02t0617500-01"/>
    <property type="gene ID" value="Os02g0617500"/>
</dbReference>
<dbReference type="Gramene" id="Os02t0617500-01">
    <property type="protein sequence ID" value="Os02t0617500-01"/>
    <property type="gene ID" value="Os02g0617500"/>
</dbReference>
<dbReference type="KEGG" id="dosa:Os02g0617500"/>
<dbReference type="eggNOG" id="KOG0952">
    <property type="taxonomic scope" value="Eukaryota"/>
</dbReference>
<dbReference type="HOGENOM" id="CLU_000335_0_2_1"/>
<dbReference type="InParanoid" id="B6DMK2"/>
<dbReference type="Proteomes" id="UP000000763">
    <property type="component" value="Chromosome 2"/>
</dbReference>
<dbReference type="Proteomes" id="UP000059680">
    <property type="component" value="Chromosome 2"/>
</dbReference>
<dbReference type="GO" id="GO:0005694">
    <property type="term" value="C:chromosome"/>
    <property type="evidence" value="ECO:0000315"/>
    <property type="project" value="UniProtKB"/>
</dbReference>
<dbReference type="GO" id="GO:0005634">
    <property type="term" value="C:nucleus"/>
    <property type="evidence" value="ECO:0000315"/>
    <property type="project" value="UniProtKB"/>
</dbReference>
<dbReference type="GO" id="GO:0005524">
    <property type="term" value="F:ATP binding"/>
    <property type="evidence" value="ECO:0007669"/>
    <property type="project" value="UniProtKB-KW"/>
</dbReference>
<dbReference type="GO" id="GO:0016887">
    <property type="term" value="F:ATP hydrolysis activity"/>
    <property type="evidence" value="ECO:0007669"/>
    <property type="project" value="RHEA"/>
</dbReference>
<dbReference type="GO" id="GO:0003677">
    <property type="term" value="F:DNA binding"/>
    <property type="evidence" value="ECO:0007669"/>
    <property type="project" value="UniProtKB-KW"/>
</dbReference>
<dbReference type="GO" id="GO:0004386">
    <property type="term" value="F:helicase activity"/>
    <property type="evidence" value="ECO:0007669"/>
    <property type="project" value="UniProtKB-KW"/>
</dbReference>
<dbReference type="GO" id="GO:0007131">
    <property type="term" value="P:reciprocal meiotic recombination"/>
    <property type="evidence" value="ECO:0000315"/>
    <property type="project" value="UniProtKB"/>
</dbReference>
<dbReference type="CDD" id="cd18023">
    <property type="entry name" value="DEXHc_HFM1"/>
    <property type="match status" value="1"/>
</dbReference>
<dbReference type="CDD" id="cd18795">
    <property type="entry name" value="SF2_C_Ski2"/>
    <property type="match status" value="1"/>
</dbReference>
<dbReference type="FunFam" id="3.40.50.300:FF:001076">
    <property type="entry name" value="ATP-dependent DNA helicase MER3"/>
    <property type="match status" value="1"/>
</dbReference>
<dbReference type="FunFam" id="1.10.150.20:FF:000077">
    <property type="entry name" value="DExH-box ATP-dependent RNA helicase DExH17"/>
    <property type="match status" value="1"/>
</dbReference>
<dbReference type="FunFam" id="1.10.3380.10:FF:000008">
    <property type="entry name" value="DExH-box ATP-dependent RNA helicase DExH17"/>
    <property type="match status" value="1"/>
</dbReference>
<dbReference type="FunFam" id="3.40.50.300:FF:001858">
    <property type="entry name" value="DExH-box ATP-dependent RNA helicase DExH17"/>
    <property type="match status" value="1"/>
</dbReference>
<dbReference type="FunFam" id="1.10.10.10:FF:000012">
    <property type="entry name" value="U5 small nuclear ribonucleoprotein helicase"/>
    <property type="match status" value="1"/>
</dbReference>
<dbReference type="Gene3D" id="1.10.150.20">
    <property type="entry name" value="5' to 3' exonuclease, C-terminal subdomain"/>
    <property type="match status" value="1"/>
</dbReference>
<dbReference type="Gene3D" id="3.40.50.300">
    <property type="entry name" value="P-loop containing nucleotide triphosphate hydrolases"/>
    <property type="match status" value="2"/>
</dbReference>
<dbReference type="Gene3D" id="1.10.3380.10">
    <property type="entry name" value="Sec63 N-terminal domain-like domain"/>
    <property type="match status" value="1"/>
</dbReference>
<dbReference type="Gene3D" id="1.10.10.10">
    <property type="entry name" value="Winged helix-like DNA-binding domain superfamily/Winged helix DNA-binding domain"/>
    <property type="match status" value="1"/>
</dbReference>
<dbReference type="InterPro" id="IPR011545">
    <property type="entry name" value="DEAD/DEAH_box_helicase_dom"/>
</dbReference>
<dbReference type="InterPro" id="IPR014001">
    <property type="entry name" value="Helicase_ATP-bd"/>
</dbReference>
<dbReference type="InterPro" id="IPR001650">
    <property type="entry name" value="Helicase_C-like"/>
</dbReference>
<dbReference type="InterPro" id="IPR052247">
    <property type="entry name" value="Meiotic_Crossover_Helicase"/>
</dbReference>
<dbReference type="InterPro" id="IPR027417">
    <property type="entry name" value="P-loop_NTPase"/>
</dbReference>
<dbReference type="InterPro" id="IPR004179">
    <property type="entry name" value="Sec63-dom"/>
</dbReference>
<dbReference type="InterPro" id="IPR036388">
    <property type="entry name" value="WH-like_DNA-bd_sf"/>
</dbReference>
<dbReference type="PANTHER" id="PTHR47835:SF3">
    <property type="entry name" value="HELICASE FOR MEIOSIS 1"/>
    <property type="match status" value="1"/>
</dbReference>
<dbReference type="PANTHER" id="PTHR47835">
    <property type="entry name" value="HFM1, ATP DEPENDENT DNA HELICASE HOMOLOG"/>
    <property type="match status" value="1"/>
</dbReference>
<dbReference type="Pfam" id="PF00270">
    <property type="entry name" value="DEAD"/>
    <property type="match status" value="1"/>
</dbReference>
<dbReference type="Pfam" id="PF00271">
    <property type="entry name" value="Helicase_C"/>
    <property type="match status" value="1"/>
</dbReference>
<dbReference type="Pfam" id="PF14520">
    <property type="entry name" value="HHH_5"/>
    <property type="match status" value="1"/>
</dbReference>
<dbReference type="Pfam" id="PF02889">
    <property type="entry name" value="Sec63"/>
    <property type="match status" value="1"/>
</dbReference>
<dbReference type="Pfam" id="PF23445">
    <property type="entry name" value="SNRNP200_wHTH"/>
    <property type="match status" value="1"/>
</dbReference>
<dbReference type="SMART" id="SM00487">
    <property type="entry name" value="DEXDc"/>
    <property type="match status" value="1"/>
</dbReference>
<dbReference type="SMART" id="SM00490">
    <property type="entry name" value="HELICc"/>
    <property type="match status" value="1"/>
</dbReference>
<dbReference type="SMART" id="SM00973">
    <property type="entry name" value="Sec63"/>
    <property type="match status" value="1"/>
</dbReference>
<dbReference type="SUPFAM" id="SSF52540">
    <property type="entry name" value="P-loop containing nucleoside triphosphate hydrolases"/>
    <property type="match status" value="1"/>
</dbReference>
<dbReference type="SUPFAM" id="SSF158702">
    <property type="entry name" value="Sec63 N-terminal domain-like"/>
    <property type="match status" value="1"/>
</dbReference>
<dbReference type="PROSITE" id="PS51192">
    <property type="entry name" value="HELICASE_ATP_BIND_1"/>
    <property type="match status" value="1"/>
</dbReference>
<dbReference type="PROSITE" id="PS51194">
    <property type="entry name" value="HELICASE_CTER"/>
    <property type="match status" value="1"/>
</dbReference>
<evidence type="ECO:0000250" key="1">
    <source>
        <dbReference type="UniProtKB" id="P51979"/>
    </source>
</evidence>
<evidence type="ECO:0000255" key="2"/>
<evidence type="ECO:0000255" key="3">
    <source>
        <dbReference type="PROSITE-ProRule" id="PRU00541"/>
    </source>
</evidence>
<evidence type="ECO:0000255" key="4">
    <source>
        <dbReference type="PROSITE-ProRule" id="PRU00542"/>
    </source>
</evidence>
<evidence type="ECO:0000256" key="5">
    <source>
        <dbReference type="SAM" id="MobiDB-lite"/>
    </source>
</evidence>
<evidence type="ECO:0000269" key="6">
    <source>
    </source>
</evidence>
<evidence type="ECO:0000269" key="7">
    <source>
    </source>
</evidence>
<evidence type="ECO:0000269" key="8">
    <source>
    </source>
</evidence>
<evidence type="ECO:0000303" key="9">
    <source>
    </source>
</evidence>
<evidence type="ECO:0000303" key="10">
    <source>
    </source>
</evidence>
<evidence type="ECO:0000305" key="11"/>
<evidence type="ECO:0000312" key="12">
    <source>
        <dbReference type="EMBL" id="ACI28521.1"/>
    </source>
</evidence>
<evidence type="ECO:0000312" key="13">
    <source>
        <dbReference type="EMBL" id="BAF09356.1"/>
    </source>
</evidence>
<comment type="function">
    <text evidence="6 7 8">DNA helicase required for crossover formation, complete synapsis of homologous chromosomes and bivalent formation during meiosis. Is specific to recombination events resulting in interference-sensitive crossovers (class I meiotic crossover) (PubMed:19417775, PubMed:19470578). Works cooperatively with ZIP4 to promote crossovers (PubMed:22393242).</text>
</comment>
<comment type="catalytic activity">
    <reaction evidence="1">
        <text>Couples ATP hydrolysis with the unwinding of duplex DNA by translocating in the 3'-5' direction.</text>
        <dbReference type="EC" id="5.6.2.4"/>
    </reaction>
</comment>
<comment type="catalytic activity">
    <reaction evidence="1">
        <text>ATP + H2O = ADP + phosphate + H(+)</text>
        <dbReference type="Rhea" id="RHEA:13065"/>
        <dbReference type="ChEBI" id="CHEBI:15377"/>
        <dbReference type="ChEBI" id="CHEBI:15378"/>
        <dbReference type="ChEBI" id="CHEBI:30616"/>
        <dbReference type="ChEBI" id="CHEBI:43474"/>
        <dbReference type="ChEBI" id="CHEBI:456216"/>
        <dbReference type="EC" id="5.6.2.4"/>
    </reaction>
</comment>
<comment type="subcellular location">
    <subcellularLocation>
        <location evidence="8">Nucleus</location>
    </subcellularLocation>
    <subcellularLocation>
        <location evidence="8">Chromosome</location>
    </subcellularLocation>
    <text evidence="8">Detected in punctuate foci on chromosomes in prophase I meiocytes.</text>
</comment>
<comment type="tissue specificity">
    <text evidence="6">Transcribed preferentially in early stages of meiocyte development and during meiosis in young flowers.</text>
</comment>
<comment type="disruption phenotype">
    <text evidence="6 7">Complete loss of fertility due to defect in meiosis (PubMed:19470578). Normal vegetative growth, pollen viability is severely reduced, male meiosis I is defective (PubMed:19417775).</text>
</comment>
<comment type="similarity">
    <text evidence="11">Belongs to the helicase family. SKI2 subfamily.</text>
</comment>
<comment type="sequence caution" evidence="11">
    <conflict type="erroneous gene model prediction">
        <sequence resource="EMBL-CDS" id="BAF09356"/>
    </conflict>
</comment>